<name>FABH_LIMRJ</name>
<keyword id="KW-0012">Acyltransferase</keyword>
<keyword id="KW-0963">Cytoplasm</keyword>
<keyword id="KW-0275">Fatty acid biosynthesis</keyword>
<keyword id="KW-0276">Fatty acid metabolism</keyword>
<keyword id="KW-0444">Lipid biosynthesis</keyword>
<keyword id="KW-0443">Lipid metabolism</keyword>
<keyword id="KW-0511">Multifunctional enzyme</keyword>
<keyword id="KW-0808">Transferase</keyword>
<sequence length="324" mass="34911">MQNLRITSTASYHPPLNITNQQLSTIMDTSDEWIKTRTGIHQRYISNIENTSDLALNVGNQLLTNANLKTTELDLIIIATMSPDAYTPSTAAIVQGELGAKNAIAFDISAACTGFIYAMNTAELMLKSSNWQNAMVIGAEVLSKLIDWKDRSTAVLFGDGAGGVLLQKTTTATPLILGRDLHTFGDLGDKIVAGKTTPKAGFPKQLTSLSPFAMAGRDVYRFATHEVPRSIASAVQQANLKLDDIDYFLLHQANERIINQIAKRLGQPITKFPMNISEYGNTGAASEPILLTQAVAHELVKPGNIIAMSGFGGGLSTGTIILNY</sequence>
<protein>
    <recommendedName>
        <fullName evidence="1">Beta-ketoacyl-[acyl-carrier-protein] synthase III</fullName>
        <shortName evidence="1">Beta-ketoacyl-ACP synthase III</shortName>
        <shortName evidence="1">KAS III</shortName>
        <ecNumber evidence="1">2.3.1.180</ecNumber>
    </recommendedName>
    <alternativeName>
        <fullName evidence="1">3-oxoacyl-[acyl-carrier-protein] synthase 3</fullName>
    </alternativeName>
    <alternativeName>
        <fullName evidence="1">3-oxoacyl-[acyl-carrier-protein] synthase III</fullName>
    </alternativeName>
</protein>
<reference key="1">
    <citation type="journal article" date="2008" name="DNA Res.">
        <title>Comparative genome analysis of Lactobacillus reuteri and Lactobacillus fermentum reveal a genomic island for reuterin and cobalamin production.</title>
        <authorList>
            <person name="Morita H."/>
            <person name="Toh H."/>
            <person name="Fukuda S."/>
            <person name="Horikawa H."/>
            <person name="Oshima K."/>
            <person name="Suzuki T."/>
            <person name="Murakami M."/>
            <person name="Hisamatsu S."/>
            <person name="Kato Y."/>
            <person name="Takizawa T."/>
            <person name="Fukuoka H."/>
            <person name="Yoshimura T."/>
            <person name="Itoh K."/>
            <person name="O'Sullivan D.J."/>
            <person name="McKay L.L."/>
            <person name="Ohno H."/>
            <person name="Kikuchi J."/>
            <person name="Masaoka T."/>
            <person name="Hattori M."/>
        </authorList>
    </citation>
    <scope>NUCLEOTIDE SEQUENCE [LARGE SCALE GENOMIC DNA]</scope>
    <source>
        <strain>JCM 1112</strain>
    </source>
</reference>
<dbReference type="EC" id="2.3.1.180" evidence="1"/>
<dbReference type="EMBL" id="AP007281">
    <property type="protein sequence ID" value="BAG25443.1"/>
    <property type="molecule type" value="Genomic_DNA"/>
</dbReference>
<dbReference type="RefSeq" id="WP_003667751.1">
    <property type="nucleotide sequence ID" value="NC_010609.1"/>
</dbReference>
<dbReference type="SMR" id="B2G7L1"/>
<dbReference type="KEGG" id="lrf:LAR_0927"/>
<dbReference type="HOGENOM" id="CLU_039592_4_1_9"/>
<dbReference type="UniPathway" id="UPA00094"/>
<dbReference type="GO" id="GO:0005737">
    <property type="term" value="C:cytoplasm"/>
    <property type="evidence" value="ECO:0007669"/>
    <property type="project" value="UniProtKB-SubCell"/>
</dbReference>
<dbReference type="GO" id="GO:0004315">
    <property type="term" value="F:3-oxoacyl-[acyl-carrier-protein] synthase activity"/>
    <property type="evidence" value="ECO:0007669"/>
    <property type="project" value="InterPro"/>
</dbReference>
<dbReference type="GO" id="GO:0033818">
    <property type="term" value="F:beta-ketoacyl-acyl-carrier-protein synthase III activity"/>
    <property type="evidence" value="ECO:0007669"/>
    <property type="project" value="UniProtKB-UniRule"/>
</dbReference>
<dbReference type="GO" id="GO:0006633">
    <property type="term" value="P:fatty acid biosynthetic process"/>
    <property type="evidence" value="ECO:0007669"/>
    <property type="project" value="UniProtKB-UniRule"/>
</dbReference>
<dbReference type="CDD" id="cd00830">
    <property type="entry name" value="KAS_III"/>
    <property type="match status" value="1"/>
</dbReference>
<dbReference type="Gene3D" id="3.40.47.10">
    <property type="match status" value="1"/>
</dbReference>
<dbReference type="HAMAP" id="MF_01815">
    <property type="entry name" value="FabH"/>
    <property type="match status" value="1"/>
</dbReference>
<dbReference type="InterPro" id="IPR013747">
    <property type="entry name" value="ACP_syn_III_C"/>
</dbReference>
<dbReference type="InterPro" id="IPR013751">
    <property type="entry name" value="ACP_syn_III_N"/>
</dbReference>
<dbReference type="InterPro" id="IPR004655">
    <property type="entry name" value="FabH"/>
</dbReference>
<dbReference type="InterPro" id="IPR016039">
    <property type="entry name" value="Thiolase-like"/>
</dbReference>
<dbReference type="NCBIfam" id="TIGR00747">
    <property type="entry name" value="fabH"/>
    <property type="match status" value="1"/>
</dbReference>
<dbReference type="NCBIfam" id="NF006829">
    <property type="entry name" value="PRK09352.1"/>
    <property type="match status" value="1"/>
</dbReference>
<dbReference type="PANTHER" id="PTHR43091">
    <property type="entry name" value="3-OXOACYL-[ACYL-CARRIER-PROTEIN] SYNTHASE"/>
    <property type="match status" value="1"/>
</dbReference>
<dbReference type="PANTHER" id="PTHR43091:SF1">
    <property type="entry name" value="BETA-KETOACYL-[ACYL-CARRIER-PROTEIN] SYNTHASE III, CHLOROPLASTIC"/>
    <property type="match status" value="1"/>
</dbReference>
<dbReference type="Pfam" id="PF08545">
    <property type="entry name" value="ACP_syn_III"/>
    <property type="match status" value="1"/>
</dbReference>
<dbReference type="Pfam" id="PF08541">
    <property type="entry name" value="ACP_syn_III_C"/>
    <property type="match status" value="1"/>
</dbReference>
<dbReference type="SUPFAM" id="SSF53901">
    <property type="entry name" value="Thiolase-like"/>
    <property type="match status" value="1"/>
</dbReference>
<gene>
    <name evidence="1" type="primary">fabH</name>
    <name type="ordered locus">LAR_0927</name>
</gene>
<feature type="chain" id="PRO_1000187875" description="Beta-ketoacyl-[acyl-carrier-protein] synthase III">
    <location>
        <begin position="1"/>
        <end position="324"/>
    </location>
</feature>
<feature type="region of interest" description="ACP-binding" evidence="1">
    <location>
        <begin position="252"/>
        <end position="256"/>
    </location>
</feature>
<feature type="active site" evidence="1">
    <location>
        <position position="112"/>
    </location>
</feature>
<feature type="active site" evidence="1">
    <location>
        <position position="251"/>
    </location>
</feature>
<feature type="active site" evidence="1">
    <location>
        <position position="281"/>
    </location>
</feature>
<evidence type="ECO:0000255" key="1">
    <source>
        <dbReference type="HAMAP-Rule" id="MF_01815"/>
    </source>
</evidence>
<organism>
    <name type="scientific">Limosilactobacillus reuteri subsp. reuteri (strain JCM 1112)</name>
    <name type="common">Lactobacillus reuteri</name>
    <dbReference type="NCBI Taxonomy" id="557433"/>
    <lineage>
        <taxon>Bacteria</taxon>
        <taxon>Bacillati</taxon>
        <taxon>Bacillota</taxon>
        <taxon>Bacilli</taxon>
        <taxon>Lactobacillales</taxon>
        <taxon>Lactobacillaceae</taxon>
        <taxon>Limosilactobacillus</taxon>
    </lineage>
</organism>
<comment type="function">
    <text evidence="1">Catalyzes the condensation reaction of fatty acid synthesis by the addition to an acyl acceptor of two carbons from malonyl-ACP. Catalyzes the first condensation reaction which initiates fatty acid synthesis and may therefore play a role in governing the total rate of fatty acid production. Possesses both acetoacetyl-ACP synthase and acetyl transacylase activities. Its substrate specificity determines the biosynthesis of branched-chain and/or straight-chain of fatty acids.</text>
</comment>
<comment type="catalytic activity">
    <reaction evidence="1">
        <text>malonyl-[ACP] + acetyl-CoA + H(+) = 3-oxobutanoyl-[ACP] + CO2 + CoA</text>
        <dbReference type="Rhea" id="RHEA:12080"/>
        <dbReference type="Rhea" id="RHEA-COMP:9623"/>
        <dbReference type="Rhea" id="RHEA-COMP:9625"/>
        <dbReference type="ChEBI" id="CHEBI:15378"/>
        <dbReference type="ChEBI" id="CHEBI:16526"/>
        <dbReference type="ChEBI" id="CHEBI:57287"/>
        <dbReference type="ChEBI" id="CHEBI:57288"/>
        <dbReference type="ChEBI" id="CHEBI:78449"/>
        <dbReference type="ChEBI" id="CHEBI:78450"/>
        <dbReference type="EC" id="2.3.1.180"/>
    </reaction>
</comment>
<comment type="pathway">
    <text evidence="1">Lipid metabolism; fatty acid biosynthesis.</text>
</comment>
<comment type="subunit">
    <text evidence="1">Homodimer.</text>
</comment>
<comment type="subcellular location">
    <subcellularLocation>
        <location evidence="1">Cytoplasm</location>
    </subcellularLocation>
</comment>
<comment type="domain">
    <text evidence="1">The last Arg residue of the ACP-binding site is essential for the weak association between ACP/AcpP and FabH.</text>
</comment>
<comment type="similarity">
    <text evidence="1">Belongs to the thiolase-like superfamily. FabH family.</text>
</comment>
<proteinExistence type="inferred from homology"/>
<accession>B2G7L1</accession>